<dbReference type="EC" id="3.1.-.-" evidence="1"/>
<dbReference type="EMBL" id="CP001186">
    <property type="protein sequence ID" value="ACK93442.1"/>
    <property type="molecule type" value="Genomic_DNA"/>
</dbReference>
<dbReference type="RefSeq" id="WP_000726650.1">
    <property type="nucleotide sequence ID" value="NC_011772.1"/>
</dbReference>
<dbReference type="SMR" id="B7IK95"/>
<dbReference type="GeneID" id="92801238"/>
<dbReference type="KEGG" id="bcg:BCG9842_B4249"/>
<dbReference type="HOGENOM" id="CLU_056349_2_0_9"/>
<dbReference type="Proteomes" id="UP000006744">
    <property type="component" value="Chromosome"/>
</dbReference>
<dbReference type="GO" id="GO:0000175">
    <property type="term" value="F:3'-5'-RNA exonuclease activity"/>
    <property type="evidence" value="ECO:0007669"/>
    <property type="project" value="UniProtKB-UniRule"/>
</dbReference>
<dbReference type="GO" id="GO:0003676">
    <property type="term" value="F:nucleic acid binding"/>
    <property type="evidence" value="ECO:0007669"/>
    <property type="project" value="InterPro"/>
</dbReference>
<dbReference type="GO" id="GO:0031125">
    <property type="term" value="P:rRNA 3'-end processing"/>
    <property type="evidence" value="ECO:0007669"/>
    <property type="project" value="TreeGrafter"/>
</dbReference>
<dbReference type="CDD" id="cd00077">
    <property type="entry name" value="HDc"/>
    <property type="match status" value="1"/>
</dbReference>
<dbReference type="CDD" id="cd04492">
    <property type="entry name" value="YhaM_OBF_like"/>
    <property type="match status" value="1"/>
</dbReference>
<dbReference type="FunFam" id="1.10.3210.10:FF:000008">
    <property type="entry name" value="3'-5' exoribonuclease YhaM"/>
    <property type="match status" value="1"/>
</dbReference>
<dbReference type="Gene3D" id="1.10.3210.10">
    <property type="entry name" value="Hypothetical protein af1432"/>
    <property type="match status" value="1"/>
</dbReference>
<dbReference type="Gene3D" id="2.40.50.140">
    <property type="entry name" value="Nucleic acid-binding proteins"/>
    <property type="match status" value="1"/>
</dbReference>
<dbReference type="HAMAP" id="MF_01427">
    <property type="entry name" value="3_5_Exoribonuc_YhaM"/>
    <property type="match status" value="1"/>
</dbReference>
<dbReference type="InterPro" id="IPR020873">
    <property type="entry name" value="3'-5'_exoribonuclease_YhaM"/>
</dbReference>
<dbReference type="InterPro" id="IPR003607">
    <property type="entry name" value="HD/PDEase_dom"/>
</dbReference>
<dbReference type="InterPro" id="IPR006674">
    <property type="entry name" value="HD_domain"/>
</dbReference>
<dbReference type="InterPro" id="IPR012340">
    <property type="entry name" value="NA-bd_OB-fold"/>
</dbReference>
<dbReference type="InterPro" id="IPR004365">
    <property type="entry name" value="NA-bd_OB_tRNA"/>
</dbReference>
<dbReference type="InterPro" id="IPR050798">
    <property type="entry name" value="YhaM_exoribonuc/phosphodiest"/>
</dbReference>
<dbReference type="NCBIfam" id="NF010007">
    <property type="entry name" value="PRK13480.1"/>
    <property type="match status" value="1"/>
</dbReference>
<dbReference type="PANTHER" id="PTHR37294">
    <property type="entry name" value="3'-5' EXORIBONUCLEASE YHAM"/>
    <property type="match status" value="1"/>
</dbReference>
<dbReference type="PANTHER" id="PTHR37294:SF1">
    <property type="entry name" value="3'-5' EXORIBONUCLEASE YHAM"/>
    <property type="match status" value="1"/>
</dbReference>
<dbReference type="Pfam" id="PF01966">
    <property type="entry name" value="HD"/>
    <property type="match status" value="1"/>
</dbReference>
<dbReference type="Pfam" id="PF01336">
    <property type="entry name" value="tRNA_anti-codon"/>
    <property type="match status" value="1"/>
</dbReference>
<dbReference type="SMART" id="SM00471">
    <property type="entry name" value="HDc"/>
    <property type="match status" value="1"/>
</dbReference>
<dbReference type="SUPFAM" id="SSF109604">
    <property type="entry name" value="HD-domain/PDEase-like"/>
    <property type="match status" value="1"/>
</dbReference>
<dbReference type="SUPFAM" id="SSF50249">
    <property type="entry name" value="Nucleic acid-binding proteins"/>
    <property type="match status" value="1"/>
</dbReference>
<dbReference type="PROSITE" id="PS51831">
    <property type="entry name" value="HD"/>
    <property type="match status" value="1"/>
</dbReference>
<reference key="1">
    <citation type="submission" date="2008-10" db="EMBL/GenBank/DDBJ databases">
        <title>Genome sequence of Bacillus cereus G9842.</title>
        <authorList>
            <person name="Dodson R.J."/>
            <person name="Durkin A.S."/>
            <person name="Rosovitz M.J."/>
            <person name="Rasko D.A."/>
            <person name="Hoffmaster A."/>
            <person name="Ravel J."/>
            <person name="Sutton G."/>
        </authorList>
    </citation>
    <scope>NUCLEOTIDE SEQUENCE [LARGE SCALE GENOMIC DNA]</scope>
    <source>
        <strain>G9842</strain>
    </source>
</reference>
<comment type="function">
    <text evidence="1">Shows a 3'-5' exoribonuclease activity.</text>
</comment>
<comment type="similarity">
    <text evidence="1">Belongs to the YhaM family.</text>
</comment>
<gene>
    <name evidence="1" type="primary">yhaM</name>
    <name type="ordered locus">BCG9842_B4249</name>
</gene>
<organism>
    <name type="scientific">Bacillus cereus (strain G9842)</name>
    <dbReference type="NCBI Taxonomy" id="405531"/>
    <lineage>
        <taxon>Bacteria</taxon>
        <taxon>Bacillati</taxon>
        <taxon>Bacillota</taxon>
        <taxon>Bacilli</taxon>
        <taxon>Bacillales</taxon>
        <taxon>Bacillaceae</taxon>
        <taxon>Bacillus</taxon>
        <taxon>Bacillus cereus group</taxon>
    </lineage>
</organism>
<protein>
    <recommendedName>
        <fullName evidence="1">3'-5' exoribonuclease YhaM</fullName>
        <ecNumber evidence="1">3.1.-.-</ecNumber>
    </recommendedName>
</protein>
<name>YHAM_BACC2</name>
<feature type="chain" id="PRO_1000145735" description="3'-5' exoribonuclease YhaM">
    <location>
        <begin position="1"/>
        <end position="314"/>
    </location>
</feature>
<feature type="domain" description="HD" evidence="2">
    <location>
        <begin position="163"/>
        <end position="279"/>
    </location>
</feature>
<accession>B7IK95</accession>
<evidence type="ECO:0000255" key="1">
    <source>
        <dbReference type="HAMAP-Rule" id="MF_01427"/>
    </source>
</evidence>
<evidence type="ECO:0000255" key="2">
    <source>
        <dbReference type="PROSITE-ProRule" id="PRU01175"/>
    </source>
</evidence>
<proteinExistence type="inferred from homology"/>
<keyword id="KW-0269">Exonuclease</keyword>
<keyword id="KW-0378">Hydrolase</keyword>
<keyword id="KW-0540">Nuclease</keyword>
<sequence length="314" mass="35514">MKKKIAEYEVGEQVDVFLLIKTATKGLASNGKPFLTVILQDPSGDIEAKLWDVSPEVEKQYVAETIVKVAGDILNYKGRIQLRVKQIRVANENEVTDISDFVEKAPVKKEDMVEKITQYIFEMRNPNIQRLTRHLLNKHQNEFLEYPAATKNHHEFVSGLAYHVVSMLDLAKAISNLYPSLDKDLLYAGVILHDLGKVIELSGPISTTYTLEGNLLGHISIMVNEIGKAADELNIDAEEVLILQHIVLSHHGKAEWGSPKPPLVKEAEILHYIDNLDAKMNMMDRALGRTKPGEYTERVFALDNRSFYKPTFHN</sequence>